<reference evidence="8" key="1">
    <citation type="journal article" date="2006" name="Proc. Natl. Acad. Sci. U.S.A.">
        <title>Evolution of sensory complexity recorded in a myxobacterial genome.</title>
        <authorList>
            <person name="Goldman B.S."/>
            <person name="Nierman W.C."/>
            <person name="Kaiser D."/>
            <person name="Slater S.C."/>
            <person name="Durkin A.S."/>
            <person name="Eisen J.A."/>
            <person name="Ronning C.M."/>
            <person name="Barbazuk W.B."/>
            <person name="Blanchard M."/>
            <person name="Field C."/>
            <person name="Halling C."/>
            <person name="Hinkle G."/>
            <person name="Iartchuk O."/>
            <person name="Kim H.S."/>
            <person name="Mackenzie C."/>
            <person name="Madupu R."/>
            <person name="Miller N."/>
            <person name="Shvartsbeyn A."/>
            <person name="Sullivan S.A."/>
            <person name="Vaudin M."/>
            <person name="Wiegand R."/>
            <person name="Kaplan H.B."/>
        </authorList>
    </citation>
    <scope>NUCLEOTIDE SEQUENCE [LARGE SCALE GENOMIC DNA]</scope>
    <scope>INDUCTION</scope>
    <source>
        <strain>DK1622</strain>
    </source>
</reference>
<reference key="2">
    <citation type="journal article" date="2020" name="Mol. Microbiol.">
        <title>SMC and the bactofilin/PadC scaffold have distinct yet redundant functions in chromosome segregation and organization in Myxococcus xanthus.</title>
        <authorList>
            <person name="Anand D."/>
            <person name="Schumacher D."/>
            <person name="Soegaard-Andersen L."/>
        </authorList>
    </citation>
    <scope>FUNCTION</scope>
    <scope>PROBABLE SUBUNIT</scope>
    <scope>DISRUPTION PHENOTYPE</scope>
    <source>
        <strain>DK1622</strain>
    </source>
</reference>
<dbReference type="EMBL" id="CP000113">
    <property type="protein sequence ID" value="ABF89073.1"/>
    <property type="molecule type" value="Genomic_DNA"/>
</dbReference>
<dbReference type="RefSeq" id="WP_011553852.1">
    <property type="nucleotide sequence ID" value="NC_008095.1"/>
</dbReference>
<dbReference type="SMR" id="Q1D5Q1"/>
<dbReference type="STRING" id="246197.MXAN_3840"/>
<dbReference type="EnsemblBacteria" id="ABF89073">
    <property type="protein sequence ID" value="ABF89073"/>
    <property type="gene ID" value="MXAN_3840"/>
</dbReference>
<dbReference type="GeneID" id="41361173"/>
<dbReference type="KEGG" id="mxa:MXAN_3840"/>
<dbReference type="eggNOG" id="COG1386">
    <property type="taxonomic scope" value="Bacteria"/>
</dbReference>
<dbReference type="HOGENOM" id="CLU_067496_0_0_7"/>
<dbReference type="OrthoDB" id="9806226at2"/>
<dbReference type="Proteomes" id="UP000002402">
    <property type="component" value="Chromosome"/>
</dbReference>
<dbReference type="GO" id="GO:0005737">
    <property type="term" value="C:cytoplasm"/>
    <property type="evidence" value="ECO:0007669"/>
    <property type="project" value="UniProtKB-SubCell"/>
</dbReference>
<dbReference type="GO" id="GO:0051301">
    <property type="term" value="P:cell division"/>
    <property type="evidence" value="ECO:0007669"/>
    <property type="project" value="UniProtKB-KW"/>
</dbReference>
<dbReference type="GO" id="GO:0051304">
    <property type="term" value="P:chromosome separation"/>
    <property type="evidence" value="ECO:0007669"/>
    <property type="project" value="InterPro"/>
</dbReference>
<dbReference type="Gene3D" id="1.10.10.10">
    <property type="entry name" value="Winged helix-like DNA-binding domain superfamily/Winged helix DNA-binding domain"/>
    <property type="match status" value="2"/>
</dbReference>
<dbReference type="InterPro" id="IPR005234">
    <property type="entry name" value="ScpB_csome_segregation"/>
</dbReference>
<dbReference type="InterPro" id="IPR036388">
    <property type="entry name" value="WH-like_DNA-bd_sf"/>
</dbReference>
<dbReference type="InterPro" id="IPR036390">
    <property type="entry name" value="WH_DNA-bd_sf"/>
</dbReference>
<dbReference type="NCBIfam" id="TIGR00281">
    <property type="entry name" value="SMC-Scp complex subunit ScpB"/>
    <property type="match status" value="1"/>
</dbReference>
<dbReference type="PANTHER" id="PTHR34298">
    <property type="entry name" value="SEGREGATION AND CONDENSATION PROTEIN B"/>
    <property type="match status" value="1"/>
</dbReference>
<dbReference type="PANTHER" id="PTHR34298:SF2">
    <property type="entry name" value="SEGREGATION AND CONDENSATION PROTEIN B"/>
    <property type="match status" value="1"/>
</dbReference>
<dbReference type="Pfam" id="PF04079">
    <property type="entry name" value="SMC_ScpB"/>
    <property type="match status" value="1"/>
</dbReference>
<dbReference type="SUPFAM" id="SSF46785">
    <property type="entry name" value="Winged helix' DNA-binding domain"/>
    <property type="match status" value="2"/>
</dbReference>
<feature type="chain" id="PRO_0000460334" description="Segregation and condensation protein B">
    <location>
        <begin position="1"/>
        <end position="329"/>
    </location>
</feature>
<feature type="region of interest" description="Disordered" evidence="2">
    <location>
        <begin position="1"/>
        <end position="39"/>
    </location>
</feature>
<feature type="region of interest" description="Disordered" evidence="2">
    <location>
        <begin position="252"/>
        <end position="274"/>
    </location>
</feature>
<feature type="region of interest" description="Disordered" evidence="2">
    <location>
        <begin position="286"/>
        <end position="329"/>
    </location>
</feature>
<name>SCPB_MYXXD</name>
<proteinExistence type="evidence at protein level"/>
<sequence>MTTGSNGPQDETPEPGTPGGPGPFSEEEIAAVTGPGPADELDELEAASIEEDSDEAPPDLETSFEKLLSKSRKLSTDRIRTVIESVLFVAERPLSVDELYMATGIERELIAEALNQLSGIHRDGISGIVLYEVAGGWQFRTDPHSGEYVRRYLRVKPQRLTRAAVETLAIIAYRQPVTRPEIEDIRGVDCGAVIKALMDRKLVKILGKREEVGRPILYGTSREFLEFFALKDLSALPTLREFHELTQEHREIVEKEDKPAPPAAGTVEALSDPAFTKRMEKSAAASEAALEDLEEAMAAADRTQKVSSSVLDTTPPEPETGDTTGPKPE</sequence>
<evidence type="ECO:0000250" key="1">
    <source>
        <dbReference type="UniProtKB" id="P35155"/>
    </source>
</evidence>
<evidence type="ECO:0000256" key="2">
    <source>
        <dbReference type="SAM" id="MobiDB-lite"/>
    </source>
</evidence>
<evidence type="ECO:0000269" key="3">
    <source>
    </source>
</evidence>
<evidence type="ECO:0000303" key="4">
    <source>
    </source>
</evidence>
<evidence type="ECO:0000305" key="5"/>
<evidence type="ECO:0000305" key="6">
    <source>
    </source>
</evidence>
<evidence type="ECO:0000305" key="7">
    <source>
    </source>
</evidence>
<evidence type="ECO:0000312" key="8">
    <source>
        <dbReference type="EMBL" id="ABF89073.1"/>
    </source>
</evidence>
<keyword id="KW-0131">Cell cycle</keyword>
<keyword id="KW-0132">Cell division</keyword>
<keyword id="KW-0159">Chromosome partition</keyword>
<keyword id="KW-0963">Cytoplasm</keyword>
<keyword id="KW-1185">Reference proteome</keyword>
<gene>
    <name evidence="4 8" type="primary">scpB</name>
    <name evidence="8" type="ordered locus">MXAN_3840</name>
</gene>
<organism>
    <name type="scientific">Myxococcus xanthus (strain DK1622)</name>
    <dbReference type="NCBI Taxonomy" id="246197"/>
    <lineage>
        <taxon>Bacteria</taxon>
        <taxon>Pseudomonadati</taxon>
        <taxon>Myxococcota</taxon>
        <taxon>Myxococcia</taxon>
        <taxon>Myxococcales</taxon>
        <taxon>Cystobacterineae</taxon>
        <taxon>Myxococcaceae</taxon>
        <taxon>Myxococcus</taxon>
    </lineage>
</organism>
<protein>
    <recommendedName>
        <fullName evidence="4">Segregation and condensation protein B</fullName>
    </recommendedName>
</protein>
<accession>Q1D5Q1</accession>
<comment type="function">
    <text evidence="3 7">A conditionally essential component of the chromosome segregation machinery (PubMed:32738827). Required for chromosome condensation and partitioning (PubMed:32738827). Important for positioning and anchoring of ParB-parS complexes (ori of replication) in the subpolar region, and of the ter replication site, as well as for segration of the ParB-parS complex and thus chromosome segregation (PubMed:32738827). Probably acts via the formation of a condensin-like complex containing Smc, ScpA and ScpB that pulls DNA away from mid-cell into both cell halves (Probable) (PubMed:32738827).</text>
</comment>
<comment type="subunit">
    <text evidence="7">Homodimer (Probable) (PubMed:32738827). Homodimerization may be required to stabilize the binding of ScpA to the Smc head domains (Probable) (PubMed:32738827). Component of the Structural Maintenance of Chromosome (SMC) condensin-like complex composed of ScpA, ScpB and the Smc homodimer (Probable) (PubMed:32738827). ScpA and ScpB bind to the head domain of Smc, the presence of the three proteins is required for the association of the complex with DNA (Probable) (PubMed:32738827).</text>
</comment>
<comment type="subcellular location">
    <subcellularLocation>
        <location evidence="7">Cytoplasm</location>
    </subcellularLocation>
    <text evidence="1">Associated with two foci at the outer edges of the nucleoid region in young cells, and at four foci within both cell halves in older cells.</text>
</comment>
<comment type="induction">
    <text evidence="6">The 3' end of scpA overlaps with the 5' end of scpB, indicating the genes are cotranscribed (PubMed:17015832).</text>
</comment>
<comment type="disruption phenotype">
    <text evidence="3">Conditionally essential, the primary defect in a double scpA-scpB in-frame deletion mutant is in chromosome segregation and organization. Cells are temperature-sensitive; they grow slower than wild-type at 25 and very poorly at 32 degrees Celsius (PubMed:32738827). Increased sensitivity to DNA gyrase inhibitor novobiocin, cells are longer, and contain 2 fully replicated chromosomes that are not completely segregated (PubMed:32738827). ParA, PadC and bactofilin BacP are less organized than in wild-type (PubMed:32738827). All these phenotypes are stronger at 32 degrees Celsius (PubMed:32738827). The double scpAB deletion is synthetically lethal with padC or triple bacNOP deletions (PubMed:32738827).</text>
</comment>
<comment type="similarity">
    <text evidence="5">Belongs to the ScpB family.</text>
</comment>